<feature type="chain" id="PRO_1000098859" description="Protease HtpX">
    <location>
        <begin position="1"/>
        <end position="292"/>
    </location>
</feature>
<feature type="transmembrane region" description="Helical" evidence="1">
    <location>
        <begin position="5"/>
        <end position="25"/>
    </location>
</feature>
<feature type="transmembrane region" description="Helical" evidence="1">
    <location>
        <begin position="34"/>
        <end position="54"/>
    </location>
</feature>
<feature type="transmembrane region" description="Helical" evidence="1">
    <location>
        <begin position="155"/>
        <end position="175"/>
    </location>
</feature>
<feature type="transmembrane region" description="Helical" evidence="1">
    <location>
        <begin position="193"/>
        <end position="213"/>
    </location>
</feature>
<feature type="active site" evidence="1">
    <location>
        <position position="141"/>
    </location>
</feature>
<feature type="binding site" evidence="1">
    <location>
        <position position="140"/>
    </location>
    <ligand>
        <name>Zn(2+)</name>
        <dbReference type="ChEBI" id="CHEBI:29105"/>
        <note>catalytic</note>
    </ligand>
</feature>
<feature type="binding site" evidence="1">
    <location>
        <position position="144"/>
    </location>
    <ligand>
        <name>Zn(2+)</name>
        <dbReference type="ChEBI" id="CHEBI:29105"/>
        <note>catalytic</note>
    </ligand>
</feature>
<feature type="binding site" evidence="1">
    <location>
        <position position="218"/>
    </location>
    <ligand>
        <name>Zn(2+)</name>
        <dbReference type="ChEBI" id="CHEBI:29105"/>
        <note>catalytic</note>
    </ligand>
</feature>
<gene>
    <name evidence="1" type="primary">htpX</name>
    <name type="ordered locus">PXO_00404</name>
</gene>
<accession>B2SHQ4</accession>
<proteinExistence type="inferred from homology"/>
<sequence length="292" mass="31173">MFNRIFLFLLTNVAVLMLAGVVMSVLGVNPAQMSGLLVMAAIFGFGGSFISLLLSKFMAKRSTGAQVITEPRTPTERWLLETVRRQAQAAGIGMPEVAVYDGPEINAFATGANRNNALVAVSTGLLQHMDQDEAEAVLGHEIAHVANGDMVTMALLQGVLNTFVIVLARVVGGIIDSAVSGNRDSGRGFAYYIIVFALEMVFGMFATMIAMWFSRRREFRADAGGAQLAGRSKMIAALERLSLNHGQNTLPSQVQAFGISGGVGDGLRRLFLSHPPLTERIAALRAANGTAM</sequence>
<dbReference type="EC" id="3.4.24.-" evidence="1"/>
<dbReference type="EMBL" id="CP000967">
    <property type="protein sequence ID" value="ACD58564.1"/>
    <property type="molecule type" value="Genomic_DNA"/>
</dbReference>
<dbReference type="RefSeq" id="WP_012444706.1">
    <property type="nucleotide sequence ID" value="NC_010717.2"/>
</dbReference>
<dbReference type="SMR" id="B2SHQ4"/>
<dbReference type="MEROPS" id="M48.002"/>
<dbReference type="KEGG" id="xop:PXO_00404"/>
<dbReference type="eggNOG" id="COG0501">
    <property type="taxonomic scope" value="Bacteria"/>
</dbReference>
<dbReference type="HOGENOM" id="CLU_042266_1_0_6"/>
<dbReference type="Proteomes" id="UP000001740">
    <property type="component" value="Chromosome"/>
</dbReference>
<dbReference type="GO" id="GO:0005886">
    <property type="term" value="C:plasma membrane"/>
    <property type="evidence" value="ECO:0007669"/>
    <property type="project" value="UniProtKB-SubCell"/>
</dbReference>
<dbReference type="GO" id="GO:0004222">
    <property type="term" value="F:metalloendopeptidase activity"/>
    <property type="evidence" value="ECO:0007669"/>
    <property type="project" value="UniProtKB-UniRule"/>
</dbReference>
<dbReference type="GO" id="GO:0008270">
    <property type="term" value="F:zinc ion binding"/>
    <property type="evidence" value="ECO:0007669"/>
    <property type="project" value="UniProtKB-UniRule"/>
</dbReference>
<dbReference type="GO" id="GO:0006508">
    <property type="term" value="P:proteolysis"/>
    <property type="evidence" value="ECO:0007669"/>
    <property type="project" value="UniProtKB-KW"/>
</dbReference>
<dbReference type="CDD" id="cd07335">
    <property type="entry name" value="M48B_HtpX_like"/>
    <property type="match status" value="1"/>
</dbReference>
<dbReference type="Gene3D" id="3.30.2010.10">
    <property type="entry name" value="Metalloproteases ('zincins'), catalytic domain"/>
    <property type="match status" value="1"/>
</dbReference>
<dbReference type="HAMAP" id="MF_00188">
    <property type="entry name" value="Pept_M48_protease_HtpX"/>
    <property type="match status" value="1"/>
</dbReference>
<dbReference type="InterPro" id="IPR050083">
    <property type="entry name" value="HtpX_protease"/>
</dbReference>
<dbReference type="InterPro" id="IPR022919">
    <property type="entry name" value="Pept_M48_protease_HtpX"/>
</dbReference>
<dbReference type="InterPro" id="IPR001915">
    <property type="entry name" value="Peptidase_M48"/>
</dbReference>
<dbReference type="NCBIfam" id="NF003965">
    <property type="entry name" value="PRK05457.1"/>
    <property type="match status" value="1"/>
</dbReference>
<dbReference type="PANTHER" id="PTHR43221">
    <property type="entry name" value="PROTEASE HTPX"/>
    <property type="match status" value="1"/>
</dbReference>
<dbReference type="PANTHER" id="PTHR43221:SF1">
    <property type="entry name" value="PROTEASE HTPX"/>
    <property type="match status" value="1"/>
</dbReference>
<dbReference type="Pfam" id="PF01435">
    <property type="entry name" value="Peptidase_M48"/>
    <property type="match status" value="1"/>
</dbReference>
<organism>
    <name type="scientific">Xanthomonas oryzae pv. oryzae (strain PXO99A)</name>
    <dbReference type="NCBI Taxonomy" id="360094"/>
    <lineage>
        <taxon>Bacteria</taxon>
        <taxon>Pseudomonadati</taxon>
        <taxon>Pseudomonadota</taxon>
        <taxon>Gammaproteobacteria</taxon>
        <taxon>Lysobacterales</taxon>
        <taxon>Lysobacteraceae</taxon>
        <taxon>Xanthomonas</taxon>
    </lineage>
</organism>
<protein>
    <recommendedName>
        <fullName evidence="1">Protease HtpX</fullName>
        <ecNumber evidence="1">3.4.24.-</ecNumber>
    </recommendedName>
    <alternativeName>
        <fullName evidence="1">Heat shock protein HtpX</fullName>
    </alternativeName>
</protein>
<reference key="1">
    <citation type="journal article" date="2008" name="BMC Genomics">
        <title>Genome sequence and rapid evolution of the rice pathogen Xanthomonas oryzae pv. oryzae PXO99A.</title>
        <authorList>
            <person name="Salzberg S.L."/>
            <person name="Sommer D.D."/>
            <person name="Schatz M.C."/>
            <person name="Phillippy A.M."/>
            <person name="Rabinowicz P.D."/>
            <person name="Tsuge S."/>
            <person name="Furutani A."/>
            <person name="Ochiai H."/>
            <person name="Delcher A.L."/>
            <person name="Kelley D."/>
            <person name="Madupu R."/>
            <person name="Puiu D."/>
            <person name="Radune D."/>
            <person name="Shumway M."/>
            <person name="Trapnell C."/>
            <person name="Aparna G."/>
            <person name="Jha G."/>
            <person name="Pandey A."/>
            <person name="Patil P.B."/>
            <person name="Ishihara H."/>
            <person name="Meyer D.F."/>
            <person name="Szurek B."/>
            <person name="Verdier V."/>
            <person name="Koebnik R."/>
            <person name="Dow J.M."/>
            <person name="Ryan R.P."/>
            <person name="Hirata H."/>
            <person name="Tsuyumu S."/>
            <person name="Won Lee S."/>
            <person name="Seo Y.-S."/>
            <person name="Sriariyanum M."/>
            <person name="Ronald P.C."/>
            <person name="Sonti R.V."/>
            <person name="Van Sluys M.-A."/>
            <person name="Leach J.E."/>
            <person name="White F.F."/>
            <person name="Bogdanove A.J."/>
        </authorList>
    </citation>
    <scope>NUCLEOTIDE SEQUENCE [LARGE SCALE GENOMIC DNA]</scope>
    <source>
        <strain>PXO99A</strain>
    </source>
</reference>
<evidence type="ECO:0000255" key="1">
    <source>
        <dbReference type="HAMAP-Rule" id="MF_00188"/>
    </source>
</evidence>
<keyword id="KW-0997">Cell inner membrane</keyword>
<keyword id="KW-1003">Cell membrane</keyword>
<keyword id="KW-0378">Hydrolase</keyword>
<keyword id="KW-0472">Membrane</keyword>
<keyword id="KW-0479">Metal-binding</keyword>
<keyword id="KW-0482">Metalloprotease</keyword>
<keyword id="KW-0645">Protease</keyword>
<keyword id="KW-0812">Transmembrane</keyword>
<keyword id="KW-1133">Transmembrane helix</keyword>
<keyword id="KW-0862">Zinc</keyword>
<comment type="cofactor">
    <cofactor evidence="1">
        <name>Zn(2+)</name>
        <dbReference type="ChEBI" id="CHEBI:29105"/>
    </cofactor>
    <text evidence="1">Binds 1 zinc ion per subunit.</text>
</comment>
<comment type="subcellular location">
    <subcellularLocation>
        <location evidence="1">Cell inner membrane</location>
        <topology evidence="1">Multi-pass membrane protein</topology>
    </subcellularLocation>
</comment>
<comment type="similarity">
    <text evidence="1">Belongs to the peptidase M48B family.</text>
</comment>
<name>HTPX_XANOP</name>